<reference key="1">
    <citation type="journal article" date="2008" name="BMC Genomics">
        <title>The linear chromosome of the plant-pathogenic mycoplasma 'Candidatus Phytoplasma mali'.</title>
        <authorList>
            <person name="Kube M."/>
            <person name="Schneider B."/>
            <person name="Kuhl H."/>
            <person name="Dandekar T."/>
            <person name="Heitmann K."/>
            <person name="Migdoll A.M."/>
            <person name="Reinhardt R."/>
            <person name="Seemueller E."/>
        </authorList>
    </citation>
    <scope>NUCLEOTIDE SEQUENCE [LARGE SCALE GENOMIC DNA]</scope>
    <source>
        <strain>AT</strain>
    </source>
</reference>
<gene>
    <name evidence="1" type="primary">tsf</name>
    <name type="ordered locus">ATP_00233</name>
</gene>
<evidence type="ECO:0000255" key="1">
    <source>
        <dbReference type="HAMAP-Rule" id="MF_00050"/>
    </source>
</evidence>
<accession>B3QZN3</accession>
<feature type="chain" id="PRO_1000117595" description="Elongation factor Ts">
    <location>
        <begin position="1"/>
        <end position="279"/>
    </location>
</feature>
<feature type="region of interest" description="Involved in Mg(2+) ion dislocation from EF-Tu" evidence="1">
    <location>
        <begin position="79"/>
        <end position="82"/>
    </location>
</feature>
<organism>
    <name type="scientific">Phytoplasma mali (strain AT)</name>
    <dbReference type="NCBI Taxonomy" id="482235"/>
    <lineage>
        <taxon>Bacteria</taxon>
        <taxon>Bacillati</taxon>
        <taxon>Mycoplasmatota</taxon>
        <taxon>Mollicutes</taxon>
        <taxon>Acholeplasmatales</taxon>
        <taxon>Acholeplasmataceae</taxon>
        <taxon>Candidatus Phytoplasma</taxon>
        <taxon>16SrX (Apple proliferation group)</taxon>
    </lineage>
</organism>
<dbReference type="EMBL" id="CU469464">
    <property type="protein sequence ID" value="CAP18420.1"/>
    <property type="molecule type" value="Genomic_DNA"/>
</dbReference>
<dbReference type="SMR" id="B3QZN3"/>
<dbReference type="STRING" id="37692.ATP_00233"/>
<dbReference type="KEGG" id="pml:ATP_00233"/>
<dbReference type="eggNOG" id="COG0264">
    <property type="taxonomic scope" value="Bacteria"/>
</dbReference>
<dbReference type="HOGENOM" id="CLU_047155_0_2_14"/>
<dbReference type="Proteomes" id="UP000002020">
    <property type="component" value="Chromosome"/>
</dbReference>
<dbReference type="GO" id="GO:0005737">
    <property type="term" value="C:cytoplasm"/>
    <property type="evidence" value="ECO:0007669"/>
    <property type="project" value="UniProtKB-SubCell"/>
</dbReference>
<dbReference type="GO" id="GO:0003746">
    <property type="term" value="F:translation elongation factor activity"/>
    <property type="evidence" value="ECO:0007669"/>
    <property type="project" value="UniProtKB-UniRule"/>
</dbReference>
<dbReference type="CDD" id="cd14275">
    <property type="entry name" value="UBA_EF-Ts"/>
    <property type="match status" value="1"/>
</dbReference>
<dbReference type="FunFam" id="1.10.8.10:FF:000001">
    <property type="entry name" value="Elongation factor Ts"/>
    <property type="match status" value="1"/>
</dbReference>
<dbReference type="Gene3D" id="1.10.286.20">
    <property type="match status" value="1"/>
</dbReference>
<dbReference type="Gene3D" id="1.10.8.10">
    <property type="entry name" value="DNA helicase RuvA subunit, C-terminal domain"/>
    <property type="match status" value="1"/>
</dbReference>
<dbReference type="Gene3D" id="3.30.479.20">
    <property type="entry name" value="Elongation factor Ts, dimerisation domain"/>
    <property type="match status" value="2"/>
</dbReference>
<dbReference type="HAMAP" id="MF_00050">
    <property type="entry name" value="EF_Ts"/>
    <property type="match status" value="1"/>
</dbReference>
<dbReference type="InterPro" id="IPR036402">
    <property type="entry name" value="EF-Ts_dimer_sf"/>
</dbReference>
<dbReference type="InterPro" id="IPR001816">
    <property type="entry name" value="Transl_elong_EFTs/EF1B"/>
</dbReference>
<dbReference type="InterPro" id="IPR014039">
    <property type="entry name" value="Transl_elong_EFTs/EF1B_dimer"/>
</dbReference>
<dbReference type="InterPro" id="IPR018101">
    <property type="entry name" value="Transl_elong_Ts_CS"/>
</dbReference>
<dbReference type="InterPro" id="IPR009060">
    <property type="entry name" value="UBA-like_sf"/>
</dbReference>
<dbReference type="NCBIfam" id="TIGR00116">
    <property type="entry name" value="tsf"/>
    <property type="match status" value="1"/>
</dbReference>
<dbReference type="PANTHER" id="PTHR11741">
    <property type="entry name" value="ELONGATION FACTOR TS"/>
    <property type="match status" value="1"/>
</dbReference>
<dbReference type="PANTHER" id="PTHR11741:SF0">
    <property type="entry name" value="ELONGATION FACTOR TS, MITOCHONDRIAL"/>
    <property type="match status" value="1"/>
</dbReference>
<dbReference type="Pfam" id="PF00889">
    <property type="entry name" value="EF_TS"/>
    <property type="match status" value="1"/>
</dbReference>
<dbReference type="SUPFAM" id="SSF54713">
    <property type="entry name" value="Elongation factor Ts (EF-Ts), dimerisation domain"/>
    <property type="match status" value="1"/>
</dbReference>
<dbReference type="SUPFAM" id="SSF46934">
    <property type="entry name" value="UBA-like"/>
    <property type="match status" value="1"/>
</dbReference>
<dbReference type="PROSITE" id="PS01127">
    <property type="entry name" value="EF_TS_2"/>
    <property type="match status" value="1"/>
</dbReference>
<name>EFTS_PHYMT</name>
<sequence length="279" mass="32279">MQFDVEKIKFLRNKTQAGIMDCQKALINSKGDIDQAIIFLRKQGIKKASEITGKILGEGLTNVIIDNNEAVLYELNSETDFVAKNKIFLDLLNLLGKILLKETKPNMNIDEILNLKFEDKKIKDLLLEKTAIVQEKICLRKVIKVIKKDDENFGMYKHQNGFISVLVITKNSKKDVSEDIAMHIAANKPKFINKEQVDLETLNQEKSIIEAQVNKELGNEKTFNIKEKIIEGRLNKFIQNICLIEQSFVKNPEQKLRDYLKEKEVEIINYWRLEVGERI</sequence>
<protein>
    <recommendedName>
        <fullName evidence="1">Elongation factor Ts</fullName>
        <shortName evidence="1">EF-Ts</shortName>
    </recommendedName>
</protein>
<keyword id="KW-0963">Cytoplasm</keyword>
<keyword id="KW-0251">Elongation factor</keyword>
<keyword id="KW-0648">Protein biosynthesis</keyword>
<keyword id="KW-1185">Reference proteome</keyword>
<proteinExistence type="inferred from homology"/>
<comment type="function">
    <text evidence="1">Associates with the EF-Tu.GDP complex and induces the exchange of GDP to GTP. It remains bound to the aminoacyl-tRNA.EF-Tu.GTP complex up to the GTP hydrolysis stage on the ribosome.</text>
</comment>
<comment type="subcellular location">
    <subcellularLocation>
        <location evidence="1">Cytoplasm</location>
    </subcellularLocation>
</comment>
<comment type="similarity">
    <text evidence="1">Belongs to the EF-Ts family.</text>
</comment>